<protein>
    <recommendedName>
        <fullName>Na(+)/H(+) antiporter subunit A1</fullName>
    </recommendedName>
    <alternativeName>
        <fullName>Mnh complex subunit A1</fullName>
    </alternativeName>
</protein>
<keyword id="KW-0050">Antiport</keyword>
<keyword id="KW-1003">Cell membrane</keyword>
<keyword id="KW-0375">Hydrogen ion transport</keyword>
<keyword id="KW-0406">Ion transport</keyword>
<keyword id="KW-0472">Membrane</keyword>
<keyword id="KW-0915">Sodium</keyword>
<keyword id="KW-0739">Sodium transport</keyword>
<keyword id="KW-0812">Transmembrane</keyword>
<keyword id="KW-1133">Transmembrane helix</keyword>
<keyword id="KW-0813">Transport</keyword>
<gene>
    <name type="primary">mnhA1</name>
    <name type="ordered locus">USA300HOU_0912</name>
</gene>
<sequence>MSLLHIAVILPLIFALIIPILYRFFKRIHLGWFVLPVPIVIFIYMLTLIKTTMSGNTVMKTLNWMPHFGMNFDLYLDGLGLLFSLLISGIGSLVVLYSIGYLSKSEQLGNFYCYLLLFMGAMLGVVLSDNVIILYLFWELTSFSSFLLISFWRERQASIYGAQKSLIITVFGGLSLLGGIILLAIPTQSFSIQYMIQHASEIQNSPFFIFAMILIMIGAFTKSAQFPFYIWLPDAMEAPTPVSAYLHSATMVKAGLYLIARMTPIFAASQGWVWTVTLVGLITLFWASLNATKQQDLKGILAFSTVSQLGMIMAMLGIGAISYHYQGDDSKIYAAAFTAAIFHLINHATFKGALFMITGAVDHSTGTRDVKKLGGLLTIMPISFTITVITALSMAGVPPFNGFLSKESFLETTFTASQANLFSVDTLGYLFPIIGIVGSVFTFVYSIKFIMHIFFGQYKPEQLPKKAHEVSILMLLSPAILATLVIVFGLFPGILTNSIIEPATSSINHTVIDDVEFHMFHGLTPAFLSTLVIYILGILLIVTFSYWVKLLQRQPGKLTFNYWYNRSANVIPNYSEKMTNSYVTDYSRNNLVIIFGALILLTFVTIFSVPFNINFKDVSPIRIFEVCIVILLLSAAFLILFAKSRLFSIIMLSAVGYAVSVLFIFFKAPDLALTQFVVESISTALFLLCFYHLPNLNRYNEKRSFQLTNALIAGGVGLSVIIIGLIAYGNRHFESISKFYQEHVYDLAHGKNMVNVILVDFRGMDTLFESSVLGIAGLAVYTMIKLRKKRQTQGNEVKNHE</sequence>
<comment type="function">
    <text evidence="1">Mnh complex is a Na(+)/H(+) antiporter involved in Na(+) excretion.</text>
</comment>
<comment type="subunit">
    <text evidence="1">May form a heterooligomeric complex that consists of seven subunits: mnhA1, mnhB1, mnhC1, mnhD1, mnhE1, mnhF1 and mnhG1.</text>
</comment>
<comment type="subcellular location">
    <subcellularLocation>
        <location evidence="3">Cell membrane</location>
        <topology evidence="3">Multi-pass membrane protein</topology>
    </subcellularLocation>
</comment>
<comment type="similarity">
    <text evidence="3">Belongs to the CPA3 antiporters (TC 2.A.63) subunit A family.</text>
</comment>
<name>MNHA1_STAAT</name>
<dbReference type="EMBL" id="CP000730">
    <property type="protein sequence ID" value="ABX28933.1"/>
    <property type="molecule type" value="Genomic_DNA"/>
</dbReference>
<dbReference type="RefSeq" id="WP_000054609.1">
    <property type="nucleotide sequence ID" value="NC_010079.1"/>
</dbReference>
<dbReference type="SMR" id="A8Z059"/>
<dbReference type="KEGG" id="sax:USA300HOU_0912"/>
<dbReference type="HOGENOM" id="CLU_007100_2_1_9"/>
<dbReference type="GO" id="GO:0005886">
    <property type="term" value="C:plasma membrane"/>
    <property type="evidence" value="ECO:0007669"/>
    <property type="project" value="UniProtKB-SubCell"/>
</dbReference>
<dbReference type="GO" id="GO:0015297">
    <property type="term" value="F:antiporter activity"/>
    <property type="evidence" value="ECO:0007669"/>
    <property type="project" value="UniProtKB-KW"/>
</dbReference>
<dbReference type="GO" id="GO:1902600">
    <property type="term" value="P:proton transmembrane transport"/>
    <property type="evidence" value="ECO:0007669"/>
    <property type="project" value="UniProtKB-KW"/>
</dbReference>
<dbReference type="GO" id="GO:0006814">
    <property type="term" value="P:sodium ion transport"/>
    <property type="evidence" value="ECO:0007669"/>
    <property type="project" value="UniProtKB-KW"/>
</dbReference>
<dbReference type="InterPro" id="IPR050616">
    <property type="entry name" value="CPA3_Na-H_Antiporter_A"/>
</dbReference>
<dbReference type="InterPro" id="IPR005663">
    <property type="entry name" value="MrpA/MnhA1/PhaAB"/>
</dbReference>
<dbReference type="InterPro" id="IPR025383">
    <property type="entry name" value="MrpA_C/MbhD"/>
</dbReference>
<dbReference type="InterPro" id="IPR046806">
    <property type="entry name" value="MrpA_C/MbhE"/>
</dbReference>
<dbReference type="InterPro" id="IPR001750">
    <property type="entry name" value="ND/Mrp_TM"/>
</dbReference>
<dbReference type="InterPro" id="IPR001516">
    <property type="entry name" value="Proton_antipo_N"/>
</dbReference>
<dbReference type="NCBIfam" id="TIGR00940">
    <property type="entry name" value="2a6301s01"/>
    <property type="match status" value="1"/>
</dbReference>
<dbReference type="NCBIfam" id="NF009285">
    <property type="entry name" value="PRK12645.1"/>
    <property type="match status" value="1"/>
</dbReference>
<dbReference type="PANTHER" id="PTHR43373">
    <property type="entry name" value="NA(+)/H(+) ANTIPORTER SUBUNIT"/>
    <property type="match status" value="1"/>
</dbReference>
<dbReference type="PANTHER" id="PTHR43373:SF1">
    <property type="entry name" value="NA(+)_H(+) ANTIPORTER SUBUNIT A"/>
    <property type="match status" value="1"/>
</dbReference>
<dbReference type="Pfam" id="PF13244">
    <property type="entry name" value="MbhD"/>
    <property type="match status" value="1"/>
</dbReference>
<dbReference type="Pfam" id="PF20501">
    <property type="entry name" value="MbhE"/>
    <property type="match status" value="1"/>
</dbReference>
<dbReference type="Pfam" id="PF00361">
    <property type="entry name" value="Proton_antipo_M"/>
    <property type="match status" value="1"/>
</dbReference>
<dbReference type="Pfam" id="PF00662">
    <property type="entry name" value="Proton_antipo_N"/>
    <property type="match status" value="1"/>
</dbReference>
<dbReference type="PRINTS" id="PR01434">
    <property type="entry name" value="NADHDHGNASE5"/>
</dbReference>
<dbReference type="PRINTS" id="PR01435">
    <property type="entry name" value="NPOXDRDTASE5"/>
</dbReference>
<organism>
    <name type="scientific">Staphylococcus aureus (strain USA300 / TCH1516)</name>
    <dbReference type="NCBI Taxonomy" id="451516"/>
    <lineage>
        <taxon>Bacteria</taxon>
        <taxon>Bacillati</taxon>
        <taxon>Bacillota</taxon>
        <taxon>Bacilli</taxon>
        <taxon>Bacillales</taxon>
        <taxon>Staphylococcaceae</taxon>
        <taxon>Staphylococcus</taxon>
    </lineage>
</organism>
<evidence type="ECO:0000250" key="1"/>
<evidence type="ECO:0000255" key="2"/>
<evidence type="ECO:0000305" key="3"/>
<proteinExistence type="inferred from homology"/>
<accession>A8Z059</accession>
<reference key="1">
    <citation type="journal article" date="2007" name="BMC Microbiol.">
        <title>Subtle genetic changes enhance virulence of methicillin resistant and sensitive Staphylococcus aureus.</title>
        <authorList>
            <person name="Highlander S.K."/>
            <person name="Hulten K.G."/>
            <person name="Qin X."/>
            <person name="Jiang H."/>
            <person name="Yerrapragada S."/>
            <person name="Mason E.O. Jr."/>
            <person name="Shang Y."/>
            <person name="Williams T.M."/>
            <person name="Fortunov R.M."/>
            <person name="Liu Y."/>
            <person name="Igboeli O."/>
            <person name="Petrosino J."/>
            <person name="Tirumalai M."/>
            <person name="Uzman A."/>
            <person name="Fox G.E."/>
            <person name="Cardenas A.M."/>
            <person name="Muzny D.M."/>
            <person name="Hemphill L."/>
            <person name="Ding Y."/>
            <person name="Dugan S."/>
            <person name="Blyth P.R."/>
            <person name="Buhay C.J."/>
            <person name="Dinh H.H."/>
            <person name="Hawes A.C."/>
            <person name="Holder M."/>
            <person name="Kovar C.L."/>
            <person name="Lee S.L."/>
            <person name="Liu W."/>
            <person name="Nazareth L.V."/>
            <person name="Wang Q."/>
            <person name="Zhou J."/>
            <person name="Kaplan S.L."/>
            <person name="Weinstock G.M."/>
        </authorList>
    </citation>
    <scope>NUCLEOTIDE SEQUENCE [LARGE SCALE GENOMIC DNA]</scope>
    <source>
        <strain>USA300 / TCH1516</strain>
    </source>
</reference>
<feature type="chain" id="PRO_0000372099" description="Na(+)/H(+) antiporter subunit A1">
    <location>
        <begin position="1"/>
        <end position="801"/>
    </location>
</feature>
<feature type="transmembrane region" description="Helical" evidence="2">
    <location>
        <begin position="1"/>
        <end position="21"/>
    </location>
</feature>
<feature type="transmembrane region" description="Helical" evidence="2">
    <location>
        <begin position="28"/>
        <end position="48"/>
    </location>
</feature>
<feature type="transmembrane region" description="Helical" evidence="2">
    <location>
        <begin position="79"/>
        <end position="99"/>
    </location>
</feature>
<feature type="transmembrane region" description="Helical" evidence="2">
    <location>
        <begin position="117"/>
        <end position="137"/>
    </location>
</feature>
<feature type="transmembrane region" description="Helical" evidence="2">
    <location>
        <begin position="166"/>
        <end position="186"/>
    </location>
</feature>
<feature type="transmembrane region" description="Helical" evidence="2">
    <location>
        <begin position="206"/>
        <end position="226"/>
    </location>
</feature>
<feature type="transmembrane region" description="Helical" evidence="2">
    <location>
        <begin position="265"/>
        <end position="285"/>
    </location>
</feature>
<feature type="transmembrane region" description="Helical" evidence="2">
    <location>
        <begin position="300"/>
        <end position="320"/>
    </location>
</feature>
<feature type="transmembrane region" description="Helical" evidence="2">
    <location>
        <begin position="337"/>
        <end position="357"/>
    </location>
</feature>
<feature type="transmembrane region" description="Helical" evidence="2">
    <location>
        <begin position="373"/>
        <end position="393"/>
    </location>
</feature>
<feature type="transmembrane region" description="Helical" evidence="2">
    <location>
        <begin position="427"/>
        <end position="447"/>
    </location>
</feature>
<feature type="transmembrane region" description="Helical" evidence="2">
    <location>
        <begin position="472"/>
        <end position="492"/>
    </location>
</feature>
<feature type="transmembrane region" description="Helical" evidence="2">
    <location>
        <begin position="522"/>
        <end position="542"/>
    </location>
</feature>
<feature type="transmembrane region" description="Helical" evidence="2">
    <location>
        <begin position="591"/>
        <end position="611"/>
    </location>
</feature>
<feature type="transmembrane region" description="Helical" evidence="2">
    <location>
        <begin position="623"/>
        <end position="643"/>
    </location>
</feature>
<feature type="transmembrane region" description="Helical" evidence="2">
    <location>
        <begin position="646"/>
        <end position="666"/>
    </location>
</feature>
<feature type="transmembrane region" description="Helical" evidence="2">
    <location>
        <begin position="671"/>
        <end position="691"/>
    </location>
</feature>
<feature type="transmembrane region" description="Helical" evidence="2">
    <location>
        <begin position="707"/>
        <end position="727"/>
    </location>
</feature>
<feature type="transmembrane region" description="Helical" evidence="2">
    <location>
        <begin position="764"/>
        <end position="784"/>
    </location>
</feature>